<dbReference type="EC" id="2.6.1.30" evidence="1"/>
<dbReference type="EMBL" id="AB195265">
    <property type="protein sequence ID" value="BAE48518.1"/>
    <property type="molecule type" value="Genomic_DNA"/>
</dbReference>
<dbReference type="EMBL" id="BA000012">
    <property type="protein sequence ID" value="BAB53032.1"/>
    <property type="molecule type" value="Genomic_DNA"/>
</dbReference>
<dbReference type="PDB" id="2Z9U">
    <property type="method" value="X-ray"/>
    <property type="resolution" value="2.00 A"/>
    <property type="chains" value="A/B=2-393"/>
</dbReference>
<dbReference type="PDB" id="2Z9V">
    <property type="method" value="X-ray"/>
    <property type="resolution" value="1.70 A"/>
    <property type="chains" value="A/B=2-393"/>
</dbReference>
<dbReference type="PDB" id="2Z9W">
    <property type="method" value="X-ray"/>
    <property type="resolution" value="1.70 A"/>
    <property type="chains" value="A/B=2-393"/>
</dbReference>
<dbReference type="PDB" id="2Z9X">
    <property type="method" value="X-ray"/>
    <property type="resolution" value="1.94 A"/>
    <property type="chains" value="A/B=2-393"/>
</dbReference>
<dbReference type="PDBsum" id="2Z9U"/>
<dbReference type="PDBsum" id="2Z9V"/>
<dbReference type="PDBsum" id="2Z9W"/>
<dbReference type="PDBsum" id="2Z9X"/>
<dbReference type="SMR" id="Q988B8"/>
<dbReference type="KEGG" id="mlo:mlr6806"/>
<dbReference type="eggNOG" id="COG0075">
    <property type="taxonomic scope" value="Bacteria"/>
</dbReference>
<dbReference type="HOGENOM" id="CLU_027686_0_1_5"/>
<dbReference type="BioCyc" id="MetaCyc:MONOMER-13150"/>
<dbReference type="BRENDA" id="2.6.1.30">
    <property type="organism ID" value="15627"/>
</dbReference>
<dbReference type="SABIO-RK" id="Q988B8"/>
<dbReference type="EvolutionaryTrace" id="Q988B8"/>
<dbReference type="Proteomes" id="UP000000552">
    <property type="component" value="Chromosome"/>
</dbReference>
<dbReference type="GO" id="GO:0008453">
    <property type="term" value="F:alanine-glyoxylate transaminase activity"/>
    <property type="evidence" value="ECO:0007669"/>
    <property type="project" value="TreeGrafter"/>
</dbReference>
<dbReference type="GO" id="GO:0004760">
    <property type="term" value="F:L-serine-pyruvate transaminase activity"/>
    <property type="evidence" value="ECO:0007669"/>
    <property type="project" value="TreeGrafter"/>
</dbReference>
<dbReference type="GO" id="GO:0030170">
    <property type="term" value="F:pyridoxal phosphate binding"/>
    <property type="evidence" value="ECO:0000314"/>
    <property type="project" value="UniProtKB"/>
</dbReference>
<dbReference type="GO" id="GO:0047300">
    <property type="term" value="F:pyridoxamine-pyruvate transaminase activity"/>
    <property type="evidence" value="ECO:0007669"/>
    <property type="project" value="UniProtKB-EC"/>
</dbReference>
<dbReference type="GO" id="GO:0008483">
    <property type="term" value="F:transaminase activity"/>
    <property type="evidence" value="ECO:0000314"/>
    <property type="project" value="UniProtKB"/>
</dbReference>
<dbReference type="GO" id="GO:0019265">
    <property type="term" value="P:glycine biosynthetic process, by transamination of glyoxylate"/>
    <property type="evidence" value="ECO:0007669"/>
    <property type="project" value="TreeGrafter"/>
</dbReference>
<dbReference type="FunFam" id="3.40.640.10:FF:000319">
    <property type="entry name" value="Pyridoxamine--pyruvate transaminase"/>
    <property type="match status" value="1"/>
</dbReference>
<dbReference type="FunFam" id="3.90.1150.10:FF:000031">
    <property type="entry name" value="Serine--glyoxylate aminotransferase"/>
    <property type="match status" value="1"/>
</dbReference>
<dbReference type="Gene3D" id="3.90.1150.10">
    <property type="entry name" value="Aspartate Aminotransferase, domain 1"/>
    <property type="match status" value="1"/>
</dbReference>
<dbReference type="Gene3D" id="3.40.640.10">
    <property type="entry name" value="Type I PLP-dependent aspartate aminotransferase-like (Major domain)"/>
    <property type="match status" value="1"/>
</dbReference>
<dbReference type="InterPro" id="IPR000192">
    <property type="entry name" value="Aminotrans_V_dom"/>
</dbReference>
<dbReference type="InterPro" id="IPR015424">
    <property type="entry name" value="PyrdxlP-dep_Trfase"/>
</dbReference>
<dbReference type="InterPro" id="IPR015421">
    <property type="entry name" value="PyrdxlP-dep_Trfase_major"/>
</dbReference>
<dbReference type="InterPro" id="IPR015422">
    <property type="entry name" value="PyrdxlP-dep_Trfase_small"/>
</dbReference>
<dbReference type="InterPro" id="IPR024169">
    <property type="entry name" value="SP_NH2Trfase/AEP_transaminase"/>
</dbReference>
<dbReference type="NCBIfam" id="NF046070">
    <property type="entry name" value="PyrdoxPyrvTramin"/>
    <property type="match status" value="1"/>
</dbReference>
<dbReference type="PANTHER" id="PTHR21152:SF24">
    <property type="entry name" value="ALANINE--GLYOXYLATE AMINOTRANSFERASE 1"/>
    <property type="match status" value="1"/>
</dbReference>
<dbReference type="PANTHER" id="PTHR21152">
    <property type="entry name" value="AMINOTRANSFERASE CLASS V"/>
    <property type="match status" value="1"/>
</dbReference>
<dbReference type="Pfam" id="PF00266">
    <property type="entry name" value="Aminotran_5"/>
    <property type="match status" value="1"/>
</dbReference>
<dbReference type="PIRSF" id="PIRSF000524">
    <property type="entry name" value="SPT"/>
    <property type="match status" value="1"/>
</dbReference>
<dbReference type="SUPFAM" id="SSF53383">
    <property type="entry name" value="PLP-dependent transferases"/>
    <property type="match status" value="1"/>
</dbReference>
<name>PPAT_RHILO</name>
<comment type="function">
    <text evidence="1 2">Catalyzes a reversible transamination reaction between pyridoxamine and pyruvate to form pyridoxal and L-alanine.</text>
</comment>
<comment type="catalytic activity">
    <reaction evidence="1">
        <text>pyridoxamine + pyruvate = pyridoxal + L-alanine</text>
        <dbReference type="Rhea" id="RHEA:12841"/>
        <dbReference type="ChEBI" id="CHEBI:15361"/>
        <dbReference type="ChEBI" id="CHEBI:17310"/>
        <dbReference type="ChEBI" id="CHEBI:57761"/>
        <dbReference type="ChEBI" id="CHEBI:57972"/>
        <dbReference type="EC" id="2.6.1.30"/>
    </reaction>
</comment>
<comment type="cofactor">
    <cofactor evidence="1 2">
        <name>pyridoxal 5'-phosphate</name>
        <dbReference type="ChEBI" id="CHEBI:597326"/>
    </cofactor>
</comment>
<comment type="biophysicochemical properties">
    <kinetics>
        <KM evidence="1">0.044 mM for pyridoxamine</KM>
        <KM evidence="1">0.059 mM for pyridoxal</KM>
        <KM evidence="1">0.34 mM for pyruvate</KM>
        <KM evidence="1">7.1 mM for 2-oxobutyrate</KM>
        <KM evidence="1">11 mM for L-alanine</KM>
        <KM evidence="1">20 mM for (S)-2-aminobutyrate</KM>
        <text evidence="1">kcat is 28 sec(-1) for pyridoxamine. kcat is 41 sec(-1) for pyridoxal. kcat is 29 sec(-1) for pyruvate. kcat is 24 sec(-1) for 2-oxobutyrate. kcat is 41 sec(-1) for L-alanine. kcat is 9 sec(-1) for (S)-2-aminobutyrate.</text>
    </kinetics>
    <phDependence>
        <text evidence="1">Optimum pH is 9.5.</text>
    </phDependence>
</comment>
<comment type="subunit">
    <text evidence="2">Homotetramer.</text>
</comment>
<comment type="similarity">
    <text evidence="4">Belongs to the class-V pyridoxal-phosphate-dependent aminotransferase family.</text>
</comment>
<proteinExistence type="evidence at protein level"/>
<accession>Q988B8</accession>
<accession>Q2Z2G1</accession>
<evidence type="ECO:0000269" key="1">
    <source>
    </source>
</evidence>
<evidence type="ECO:0000269" key="2">
    <source>
    </source>
</evidence>
<evidence type="ECO:0000303" key="3">
    <source>
    </source>
</evidence>
<evidence type="ECO:0000305" key="4"/>
<evidence type="ECO:0007744" key="5">
    <source>
        <dbReference type="PDB" id="2Z9U"/>
    </source>
</evidence>
<evidence type="ECO:0007744" key="6">
    <source>
        <dbReference type="PDB" id="2Z9V"/>
    </source>
</evidence>
<evidence type="ECO:0007744" key="7">
    <source>
        <dbReference type="PDB" id="2Z9W"/>
    </source>
</evidence>
<evidence type="ECO:0007744" key="8">
    <source>
        <dbReference type="PDB" id="2Z9X"/>
    </source>
</evidence>
<evidence type="ECO:0007829" key="9">
    <source>
        <dbReference type="PDB" id="2Z9V"/>
    </source>
</evidence>
<reference key="1">
    <citation type="journal article" date="2006" name="Biochem. J.">
        <title>Molecular cloning, expression and characterization of pyridoxamine-pyruvate aminotransferase.</title>
        <authorList>
            <person name="Yoshikane Y."/>
            <person name="Yokochi N."/>
            <person name="Ohnishi K."/>
            <person name="Hayashi H."/>
            <person name="Yagi T."/>
        </authorList>
    </citation>
    <scope>NUCLEOTIDE SEQUENCE [GENOMIC DNA]</scope>
    <scope>PROTEIN SEQUENCE OF 2-8</scope>
    <scope>FUNCTION</scope>
    <scope>CATALYTIC ACTIVITY</scope>
    <scope>BIOPHYSICOCHEMICAL PROPERTIES</scope>
    <scope>MUTAGENESIS OF LYS-197 AND CYS-198</scope>
    <scope>COFACTOR</scope>
    <source>
        <strain>LMG 29417 / CECT 9101 / MAFF 303099</strain>
    </source>
</reference>
<reference key="2">
    <citation type="journal article" date="2000" name="DNA Res.">
        <title>Complete genome structure of the nitrogen-fixing symbiotic bacterium Mesorhizobium loti.</title>
        <authorList>
            <person name="Kaneko T."/>
            <person name="Nakamura Y."/>
            <person name="Sato S."/>
            <person name="Asamizu E."/>
            <person name="Kato T."/>
            <person name="Sasamoto S."/>
            <person name="Watanabe A."/>
            <person name="Idesawa K."/>
            <person name="Ishikawa A."/>
            <person name="Kawashima K."/>
            <person name="Kimura T."/>
            <person name="Kishida Y."/>
            <person name="Kiyokawa C."/>
            <person name="Kohara M."/>
            <person name="Matsumoto M."/>
            <person name="Matsuno A."/>
            <person name="Mochizuki Y."/>
            <person name="Nakayama S."/>
            <person name="Nakazaki N."/>
            <person name="Shimpo S."/>
            <person name="Sugimoto M."/>
            <person name="Takeuchi C."/>
            <person name="Yamada M."/>
            <person name="Tabata S."/>
        </authorList>
    </citation>
    <scope>NUCLEOTIDE SEQUENCE [LARGE SCALE GENOMIC DNA]</scope>
    <source>
        <strain>LMG 29417 / CECT 9101 / MAFF 303099</strain>
    </source>
</reference>
<reference evidence="5 6 7 8" key="3">
    <citation type="journal article" date="2008" name="J. Biol. Chem.">
        <title>Crystal structure of pyridoxamine-pyruvate aminotransferase from Mesorhizobium loti MAFF303099.</title>
        <authorList>
            <person name="Yoshikane Y."/>
            <person name="Yokochi N."/>
            <person name="Yamasaki M."/>
            <person name="Mizutani K."/>
            <person name="Ohnishi K."/>
            <person name="Mikami B."/>
            <person name="Hayashi H."/>
            <person name="Yagi T."/>
        </authorList>
    </citation>
    <scope>X-RAY CRYSTALLOGRAPHY (1.70 ANGSTROMS) OF 2-393 IN COMPLEX WITH PYRIDOXAL PHOSPHATE</scope>
    <scope>FUNCTION</scope>
    <scope>COFACTOR</scope>
    <scope>SUBUNIT</scope>
    <scope>MUTAGENESIS OF GLU-68 AND ARG-336</scope>
    <source>
        <strain>LMG 29417 / CECT 9101 / MAFF 303099</strain>
    </source>
</reference>
<keyword id="KW-0002">3D-structure</keyword>
<keyword id="KW-0032">Aminotransferase</keyword>
<keyword id="KW-0868">Chloride</keyword>
<keyword id="KW-0903">Direct protein sequencing</keyword>
<keyword id="KW-0663">Pyridoxal phosphate</keyword>
<keyword id="KW-0808">Transferase</keyword>
<gene>
    <name type="primary">ppaT</name>
    <name type="ordered locus">mlr6806</name>
</gene>
<sequence length="393" mass="41590">MMRYPEHADPVITLTAGPVNAYPEVLRGLGRTVLYDYDPAFQLLYEKVVDKAQKAMRLSNKPVILHGEPVLGLEAAAASLISPDDVVLNLASGVYGKGFGYWAKRYSPHLLEIEVPYNEAIDPQAVADMLKAHPEITVVSVCHHDTPSGTINPIDAIGALVSAHGAYLIVDAVSSFGGMKTHPEDCKADIYVTGPNKCLGAPPGLTMMGVSERAWAKMKANPLAPRASMLSIVDWENAWSRDKPFPFTPSVSEINGLDVALDLYLNEGPEAVWARHALTAKAMRAGVTAMGLSVWAASDSIASPTTTAVRTPDGVDEKALRQAARARYGVVFSSGRGETLGKLTRIGHMGPTAQPIYAIAALTALGGAMNAAGRKLAIGKGIEAALAVIDADA</sequence>
<organism>
    <name type="scientific">Mesorhizobium japonicum (strain LMG 29417 / CECT 9101 / MAFF 303099)</name>
    <name type="common">Mesorhizobium loti (strain MAFF 303099)</name>
    <dbReference type="NCBI Taxonomy" id="266835"/>
    <lineage>
        <taxon>Bacteria</taxon>
        <taxon>Pseudomonadati</taxon>
        <taxon>Pseudomonadota</taxon>
        <taxon>Alphaproteobacteria</taxon>
        <taxon>Hyphomicrobiales</taxon>
        <taxon>Phyllobacteriaceae</taxon>
        <taxon>Mesorhizobium</taxon>
    </lineage>
</organism>
<protein>
    <recommendedName>
        <fullName>Pyridoxamine--pyruvate transaminase</fullName>
        <ecNumber evidence="1">2.6.1.30</ecNumber>
    </recommendedName>
    <alternativeName>
        <fullName evidence="3">Pyridoxamine-pyruvate aminotransferase</fullName>
    </alternativeName>
</protein>
<feature type="initiator methionine" description="Removed" evidence="1">
    <location>
        <position position="1"/>
    </location>
</feature>
<feature type="chain" id="PRO_0000430257" description="Pyridoxamine--pyruvate transaminase">
    <location>
        <begin position="2"/>
        <end position="393"/>
    </location>
</feature>
<feature type="binding site" evidence="2">
    <location>
        <position position="68"/>
    </location>
    <ligand>
        <name>pyridoxal 5'-phosphate</name>
        <dbReference type="ChEBI" id="CHEBI:597326"/>
    </ligand>
</feature>
<feature type="binding site" evidence="2">
    <location>
        <position position="95"/>
    </location>
    <ligand>
        <name>pyridoxal 5'-phosphate</name>
        <dbReference type="ChEBI" id="CHEBI:597326"/>
    </ligand>
</feature>
<feature type="binding site" evidence="2">
    <location>
        <position position="146"/>
    </location>
    <ligand>
        <name>pyridoxal 5'-phosphate</name>
        <dbReference type="ChEBI" id="CHEBI:597326"/>
    </ligand>
</feature>
<feature type="binding site" evidence="2">
    <location>
        <position position="345"/>
    </location>
    <ligand>
        <name>pyridoxal 5'-phosphate</name>
        <dbReference type="ChEBI" id="CHEBI:597326"/>
    </ligand>
</feature>
<feature type="modified residue" description="N6-(pyridoxal phosphate)lysine" evidence="2">
    <location>
        <position position="197"/>
    </location>
</feature>
<feature type="mutagenesis site" description="Low but detectable pyridoxamine--pyruvate transaminase activity." evidence="2">
    <original>E</original>
    <variation>A</variation>
    <variation>G</variation>
    <location>
        <position position="68"/>
    </location>
</feature>
<feature type="mutagenesis site" description="Loss of function." evidence="1">
    <original>K</original>
    <variation>L</variation>
    <location>
        <position position="197"/>
    </location>
</feature>
<feature type="mutagenesis site" description="No effect on enzyme activity." evidence="1">
    <original>C</original>
    <variation>A</variation>
    <location>
        <position position="198"/>
    </location>
</feature>
<feature type="mutagenesis site" description="Strongly decreased affinity for pyruvate." evidence="2">
    <original>R</original>
    <variation>A</variation>
    <location>
        <position position="336"/>
    </location>
</feature>
<feature type="strand" evidence="9">
    <location>
        <begin position="11"/>
        <end position="13"/>
    </location>
</feature>
<feature type="strand" evidence="9">
    <location>
        <begin position="15"/>
        <end position="17"/>
    </location>
</feature>
<feature type="helix" evidence="9">
    <location>
        <begin position="23"/>
        <end position="28"/>
    </location>
</feature>
<feature type="helix" evidence="9">
    <location>
        <begin position="39"/>
        <end position="55"/>
    </location>
</feature>
<feature type="strand" evidence="9">
    <location>
        <begin position="63"/>
        <end position="67"/>
    </location>
</feature>
<feature type="helix" evidence="9">
    <location>
        <begin position="70"/>
        <end position="80"/>
    </location>
</feature>
<feature type="strand" evidence="9">
    <location>
        <begin position="87"/>
        <end position="93"/>
    </location>
</feature>
<feature type="helix" evidence="9">
    <location>
        <begin position="94"/>
        <end position="106"/>
    </location>
</feature>
<feature type="strand" evidence="9">
    <location>
        <begin position="110"/>
        <end position="114"/>
    </location>
</feature>
<feature type="helix" evidence="9">
    <location>
        <begin position="123"/>
        <end position="132"/>
    </location>
</feature>
<feature type="strand" evidence="9">
    <location>
        <begin position="138"/>
        <end position="144"/>
    </location>
</feature>
<feature type="helix" evidence="9">
    <location>
        <begin position="146"/>
        <end position="148"/>
    </location>
</feature>
<feature type="helix" evidence="9">
    <location>
        <begin position="154"/>
        <end position="163"/>
    </location>
</feature>
<feature type="strand" evidence="9">
    <location>
        <begin position="167"/>
        <end position="171"/>
    </location>
</feature>
<feature type="turn" evidence="9">
    <location>
        <begin position="173"/>
        <end position="175"/>
    </location>
</feature>
<feature type="helix" evidence="9">
    <location>
        <begin position="183"/>
        <end position="186"/>
    </location>
</feature>
<feature type="strand" evidence="9">
    <location>
        <begin position="189"/>
        <end position="193"/>
    </location>
</feature>
<feature type="strand" evidence="9">
    <location>
        <begin position="195"/>
        <end position="197"/>
    </location>
</feature>
<feature type="strand" evidence="9">
    <location>
        <begin position="206"/>
        <end position="210"/>
    </location>
</feature>
<feature type="helix" evidence="9">
    <location>
        <begin position="212"/>
        <end position="219"/>
    </location>
</feature>
<feature type="helix" evidence="9">
    <location>
        <begin position="233"/>
        <end position="235"/>
    </location>
</feature>
<feature type="turn" evidence="9">
    <location>
        <begin position="236"/>
        <end position="239"/>
    </location>
</feature>
<feature type="helix" evidence="9">
    <location>
        <begin position="251"/>
        <end position="267"/>
    </location>
</feature>
<feature type="helix" evidence="9">
    <location>
        <begin position="269"/>
        <end position="289"/>
    </location>
</feature>
<feature type="strand" evidence="9">
    <location>
        <begin position="294"/>
        <end position="298"/>
    </location>
</feature>
<feature type="helix" evidence="9">
    <location>
        <begin position="299"/>
        <end position="301"/>
    </location>
</feature>
<feature type="strand" evidence="9">
    <location>
        <begin position="306"/>
        <end position="310"/>
    </location>
</feature>
<feature type="helix" evidence="9">
    <location>
        <begin position="317"/>
        <end position="328"/>
    </location>
</feature>
<feature type="helix" evidence="9">
    <location>
        <begin position="337"/>
        <end position="339"/>
    </location>
</feature>
<feature type="turn" evidence="9">
    <location>
        <begin position="340"/>
        <end position="342"/>
    </location>
</feature>
<feature type="strand" evidence="9">
    <location>
        <begin position="343"/>
        <end position="347"/>
    </location>
</feature>
<feature type="helix" evidence="9">
    <location>
        <begin position="350"/>
        <end position="352"/>
    </location>
</feature>
<feature type="helix" evidence="9">
    <location>
        <begin position="355"/>
        <end position="371"/>
    </location>
</feature>
<feature type="helix" evidence="9">
    <location>
        <begin position="378"/>
        <end position="392"/>
    </location>
</feature>